<evidence type="ECO:0000305" key="1"/>
<keyword id="KW-0687">Ribonucleoprotein</keyword>
<keyword id="KW-0689">Ribosomal protein</keyword>
<protein>
    <recommendedName>
        <fullName evidence="1">Large ribosomal subunit protein eL30</fullName>
    </recommendedName>
    <alternativeName>
        <fullName>50S ribosomal protein L30e</fullName>
    </alternativeName>
</protein>
<reference key="1">
    <citation type="journal article" date="1998" name="DNA Res.">
        <title>Complete sequence and gene organization of the genome of a hyper-thermophilic archaebacterium, Pyrococcus horikoshii OT3.</title>
        <authorList>
            <person name="Kawarabayasi Y."/>
            <person name="Sawada M."/>
            <person name="Horikawa H."/>
            <person name="Haikawa Y."/>
            <person name="Hino Y."/>
            <person name="Yamamoto S."/>
            <person name="Sekine M."/>
            <person name="Baba S."/>
            <person name="Kosugi H."/>
            <person name="Hosoyama A."/>
            <person name="Nagai Y."/>
            <person name="Sakai M."/>
            <person name="Ogura K."/>
            <person name="Otsuka R."/>
            <person name="Nakazawa H."/>
            <person name="Takamiya M."/>
            <person name="Ohfuku Y."/>
            <person name="Funahashi T."/>
            <person name="Tanaka T."/>
            <person name="Kudoh Y."/>
            <person name="Yamazaki J."/>
            <person name="Kushida N."/>
            <person name="Oguchi A."/>
            <person name="Aoki K."/>
            <person name="Yoshizawa T."/>
            <person name="Nakamura Y."/>
            <person name="Robb F.T."/>
            <person name="Horikoshi K."/>
            <person name="Masuchi Y."/>
            <person name="Shizuya H."/>
            <person name="Kikuchi H."/>
        </authorList>
    </citation>
    <scope>NUCLEOTIDE SEQUENCE [LARGE SCALE GENOMIC DNA]</scope>
    <source>
        <strain>ATCC 700860 / DSM 12428 / JCM 9974 / NBRC 100139 / OT-3</strain>
    </source>
</reference>
<feature type="chain" id="PRO_0000146156" description="Large ribosomal subunit protein eL30">
    <location>
        <begin position="1"/>
        <end position="99"/>
    </location>
</feature>
<accession>O74018</accession>
<organism>
    <name type="scientific">Pyrococcus horikoshii (strain ATCC 700860 / DSM 12428 / JCM 9974 / NBRC 100139 / OT-3)</name>
    <dbReference type="NCBI Taxonomy" id="70601"/>
    <lineage>
        <taxon>Archaea</taxon>
        <taxon>Methanobacteriati</taxon>
        <taxon>Methanobacteriota</taxon>
        <taxon>Thermococci</taxon>
        <taxon>Thermococcales</taxon>
        <taxon>Thermococcaceae</taxon>
        <taxon>Pyrococcus</taxon>
    </lineage>
</organism>
<dbReference type="EMBL" id="BA000001">
    <property type="protein sequence ID" value="BAA30654.1"/>
    <property type="molecule type" value="Genomic_DNA"/>
</dbReference>
<dbReference type="PIR" id="F71031">
    <property type="entry name" value="F71031"/>
</dbReference>
<dbReference type="RefSeq" id="WP_010885622.1">
    <property type="nucleotide sequence ID" value="NC_000961.1"/>
</dbReference>
<dbReference type="SMR" id="O74018"/>
<dbReference type="STRING" id="70601.gene:9378529"/>
<dbReference type="EnsemblBacteria" id="BAA30654">
    <property type="protein sequence ID" value="BAA30654"/>
    <property type="gene ID" value="BAA30654"/>
</dbReference>
<dbReference type="GeneID" id="1443862"/>
<dbReference type="KEGG" id="pho:PHS043"/>
<dbReference type="eggNOG" id="arCOG01752">
    <property type="taxonomic scope" value="Archaea"/>
</dbReference>
<dbReference type="OrthoDB" id="10759at2157"/>
<dbReference type="Proteomes" id="UP000000752">
    <property type="component" value="Chromosome"/>
</dbReference>
<dbReference type="GO" id="GO:0022625">
    <property type="term" value="C:cytosolic large ribosomal subunit"/>
    <property type="evidence" value="ECO:0007669"/>
    <property type="project" value="InterPro"/>
</dbReference>
<dbReference type="GO" id="GO:0003723">
    <property type="term" value="F:RNA binding"/>
    <property type="evidence" value="ECO:0007669"/>
    <property type="project" value="InterPro"/>
</dbReference>
<dbReference type="GO" id="GO:0003735">
    <property type="term" value="F:structural constituent of ribosome"/>
    <property type="evidence" value="ECO:0007669"/>
    <property type="project" value="InterPro"/>
</dbReference>
<dbReference type="GO" id="GO:0006412">
    <property type="term" value="P:translation"/>
    <property type="evidence" value="ECO:0007669"/>
    <property type="project" value="UniProtKB-UniRule"/>
</dbReference>
<dbReference type="FunFam" id="3.30.1330.30:FF:000053">
    <property type="entry name" value="50S ribosomal protein L30e"/>
    <property type="match status" value="1"/>
</dbReference>
<dbReference type="Gene3D" id="3.30.1330.30">
    <property type="match status" value="1"/>
</dbReference>
<dbReference type="HAMAP" id="MF_00481">
    <property type="entry name" value="Ribosomal_eL30"/>
    <property type="match status" value="1"/>
</dbReference>
<dbReference type="InterPro" id="IPR000231">
    <property type="entry name" value="Ribosomal_eL30"/>
</dbReference>
<dbReference type="InterPro" id="IPR039109">
    <property type="entry name" value="Ribosomal_eL30-like"/>
</dbReference>
<dbReference type="InterPro" id="IPR029064">
    <property type="entry name" value="Ribosomal_eL30-like_sf"/>
</dbReference>
<dbReference type="InterPro" id="IPR022991">
    <property type="entry name" value="Ribosomal_eL30_CS"/>
</dbReference>
<dbReference type="InterPro" id="IPR004038">
    <property type="entry name" value="Ribosomal_eL8/eL30/eS12/Gad45"/>
</dbReference>
<dbReference type="NCBIfam" id="NF002172">
    <property type="entry name" value="PRK01018.1"/>
    <property type="match status" value="1"/>
</dbReference>
<dbReference type="PANTHER" id="PTHR11449">
    <property type="entry name" value="RIBOSOMAL PROTEIN L30"/>
    <property type="match status" value="1"/>
</dbReference>
<dbReference type="Pfam" id="PF01248">
    <property type="entry name" value="Ribosomal_L7Ae"/>
    <property type="match status" value="1"/>
</dbReference>
<dbReference type="SUPFAM" id="SSF55315">
    <property type="entry name" value="L30e-like"/>
    <property type="match status" value="1"/>
</dbReference>
<dbReference type="PROSITE" id="PS00709">
    <property type="entry name" value="RIBOSOMAL_L30E_1"/>
    <property type="match status" value="1"/>
</dbReference>
<dbReference type="PROSITE" id="PS00993">
    <property type="entry name" value="RIBOSOMAL_L30E_2"/>
    <property type="match status" value="1"/>
</dbReference>
<proteinExistence type="inferred from homology"/>
<gene>
    <name type="primary">rpl30e</name>
    <name type="ordered locus">PH1543.1</name>
    <name type="ORF">PHS043</name>
</gene>
<sequence>MDLAFELKKALETGKVILGSNETIRLAKTGGAKLIIVARNAPKEIKDDIYYYAKLSDIPVYEFEGTSVELGTLLGKPFVVASLAIVDPGESRILALVKR</sequence>
<comment type="similarity">
    <text evidence="1">Belongs to the eukaryotic ribosomal protein eL30 family.</text>
</comment>
<name>RL30E_PYRHO</name>